<evidence type="ECO:0000255" key="1"/>
<evidence type="ECO:0000255" key="2">
    <source>
        <dbReference type="PROSITE-ProRule" id="PRU00099"/>
    </source>
</evidence>
<evidence type="ECO:0000255" key="3">
    <source>
        <dbReference type="PROSITE-ProRule" id="PRU00159"/>
    </source>
</evidence>
<organism>
    <name type="scientific">Strongylocentrotus purpuratus</name>
    <name type="common">Purple sea urchin</name>
    <dbReference type="NCBI Taxonomy" id="7668"/>
    <lineage>
        <taxon>Eukaryota</taxon>
        <taxon>Metazoa</taxon>
        <taxon>Echinodermata</taxon>
        <taxon>Eleutherozoa</taxon>
        <taxon>Echinozoa</taxon>
        <taxon>Echinoidea</taxon>
        <taxon>Euechinoidea</taxon>
        <taxon>Echinacea</taxon>
        <taxon>Camarodonta</taxon>
        <taxon>Echinidea</taxon>
        <taxon>Strongylocentrotidae</taxon>
        <taxon>Strongylocentrotus</taxon>
    </lineage>
</organism>
<keyword id="KW-0141">cGMP biosynthesis</keyword>
<keyword id="KW-0325">Glycoprotein</keyword>
<keyword id="KW-0342">GTP-binding</keyword>
<keyword id="KW-0456">Lyase</keyword>
<keyword id="KW-0472">Membrane</keyword>
<keyword id="KW-0547">Nucleotide-binding</keyword>
<keyword id="KW-0597">Phosphoprotein</keyword>
<keyword id="KW-0675">Receptor</keyword>
<keyword id="KW-1185">Reference proteome</keyword>
<keyword id="KW-0732">Signal</keyword>
<keyword id="KW-0812">Transmembrane</keyword>
<keyword id="KW-1133">Transmembrane helix</keyword>
<comment type="function">
    <text>Implicated as a cell-surface receptor on spermatozoa for 'speract' a chemotactic peptide, and on various other cells as a receptor for atrial natriuretic peptide.</text>
</comment>
<comment type="catalytic activity">
    <reaction>
        <text>GTP = 3',5'-cyclic GMP + diphosphate</text>
        <dbReference type="Rhea" id="RHEA:13665"/>
        <dbReference type="ChEBI" id="CHEBI:33019"/>
        <dbReference type="ChEBI" id="CHEBI:37565"/>
        <dbReference type="ChEBI" id="CHEBI:57746"/>
        <dbReference type="EC" id="4.6.1.2"/>
    </reaction>
</comment>
<comment type="subcellular location">
    <subcellularLocation>
        <location>Membrane</location>
        <topology>Single-pass type I membrane protein</topology>
    </subcellularLocation>
</comment>
<comment type="similarity">
    <text evidence="2">Belongs to the adenylyl cyclase class-4/guanylyl cyclase family.</text>
</comment>
<protein>
    <recommendedName>
        <fullName>Speract receptor</fullName>
        <ecNumber>4.6.1.2</ecNumber>
    </recommendedName>
    <alternativeName>
        <fullName>Guanylate cyclase</fullName>
    </alternativeName>
</protein>
<sequence length="1125" mass="126257">MAHARHLFLFMVAFTITMVIARLDFNPTIINEDRGRTKIHVGLLAEWTTADGDQGTLGFPALGALPLAISLANQDSNILNGFDVQFEWVDTHCDINIGMHAVSDWWKRGFVGVIGPGCGCTYEGRLASALNIPMIDYVCDENPVSDKSIYPTFLRTIPPSIQVVEAIILTLQRYELDQVSVVVENITKYRNIFNTMKDKFDERDYEILHEEYYAGFDPWDYEMDDPFSEIIQRTKETTRIYVFFGDASDLRQFAMTALDEGILDSGDYVILGAVVDLEVRDSQDYHSLDYILDTSEYLNQINPDYARLFKNREYTRSDNDRALEALKSVIIVTGAPVLKTRNWDRFSTFVIDNALDAPFNGELELRAEIDFASVYMFDATMQLLEALDRTHAAGGDIYDGEEVVSTLLNSTYRSKTDTFYQFDENGDGVKPYVLLHLIPIPKGDGGATKDSLGMYPIGTFNRENGQWGFEEALDEDANVLKPVWHNRDEPPLDMPPCGFHGELCTNWALYLGASIPTFLIIFGGLIGFFIYRKRAYEAALDSLVWKVDWSEVQTKATDTNSQGFSMKNMVMSAISVISNAEKQQIFATIGTYRGTVCALHAVHKNHIDLTRAVRTELKIMRDMRHDNICPFIGACIDRPHISILMHYCAKGSLQDILENDDIKLDSMFLSSLIADLVKGIVYLHSSEIKSHGHLKSSNCVVDNRWVLQITDYGLNEFKKGQKQDVDLGDHAKLARQLWTSPEHLRQEGSMPTAGSPQGDIYSFAIILTELYSRQEPFHENEMDLADIIGRVKSGEVPPYRPILNAVNAAAPDCVLSAIRACWPEDPADRPNIMAVRTMLAPLQKGLKPNILDNMIAIMERYTNNLEELVDERTQELQKEKTKTEQLLHRMLPPSIASQLIKGIAVLPETFEMVSIFFSDIVGFTALSAASTPIQVVNLLNDLYTLFDAIISNYDVYKVETIGDAYMLVSGLPLRNGDRHAGQIASTAHHLLESVKGFIVPHKPEVFLKLRIGIHSGSCVAGVVGLTMPRYCLFGDTVNTASRMESNGLALRIHVSPWCKQVLDKLGGYELEDRGLVPMNGKGEIHTFWLLGQDPSYKITKVKPPPQKLTQEAIEIAANRVIPDDV</sequence>
<accession>P16065</accession>
<name>GCY_STRPU</name>
<reference key="1">
    <citation type="journal article" date="1989" name="J. Biol. Chem.">
        <title>The membrane form of guanylate cyclase. Homology with a subunit of the cytoplasmic form of the enzyme.</title>
        <authorList>
            <person name="Thorpe D.S."/>
            <person name="Garbers D.L."/>
        </authorList>
    </citation>
    <scope>NUCLEOTIDE SEQUENCE [MRNA]</scope>
</reference>
<dbReference type="EC" id="4.6.1.2"/>
<dbReference type="EMBL" id="M22444">
    <property type="protein sequence ID" value="AAA30051.1"/>
    <property type="molecule type" value="mRNA"/>
</dbReference>
<dbReference type="PIR" id="A33535">
    <property type="entry name" value="OYURCP"/>
</dbReference>
<dbReference type="RefSeq" id="NP_999705.1">
    <property type="nucleotide sequence ID" value="NM_214540.1"/>
</dbReference>
<dbReference type="SMR" id="P16065"/>
<dbReference type="STRING" id="7668.P16065"/>
<dbReference type="EnsemblMetazoa" id="NM_214540">
    <property type="protein sequence ID" value="NP_999705"/>
    <property type="gene ID" value="LOC373321"/>
</dbReference>
<dbReference type="GeneID" id="373321"/>
<dbReference type="KEGG" id="spu:373321"/>
<dbReference type="eggNOG" id="KOG1023">
    <property type="taxonomic scope" value="Eukaryota"/>
</dbReference>
<dbReference type="HOGENOM" id="CLU_001072_1_2_1"/>
<dbReference type="InParanoid" id="P16065"/>
<dbReference type="OMA" id="DRPHICI"/>
<dbReference type="OrthoDB" id="1890790at2759"/>
<dbReference type="PhylomeDB" id="P16065"/>
<dbReference type="Proteomes" id="UP000007110">
    <property type="component" value="Unassembled WGS sequence"/>
</dbReference>
<dbReference type="GO" id="GO:0005886">
    <property type="term" value="C:plasma membrane"/>
    <property type="evidence" value="ECO:0000318"/>
    <property type="project" value="GO_Central"/>
</dbReference>
<dbReference type="GO" id="GO:0005524">
    <property type="term" value="F:ATP binding"/>
    <property type="evidence" value="ECO:0007669"/>
    <property type="project" value="InterPro"/>
</dbReference>
<dbReference type="GO" id="GO:0005525">
    <property type="term" value="F:GTP binding"/>
    <property type="evidence" value="ECO:0007669"/>
    <property type="project" value="UniProtKB-KW"/>
</dbReference>
<dbReference type="GO" id="GO:0004383">
    <property type="term" value="F:guanylate cyclase activity"/>
    <property type="evidence" value="ECO:0000318"/>
    <property type="project" value="GO_Central"/>
</dbReference>
<dbReference type="GO" id="GO:0001653">
    <property type="term" value="F:peptide receptor activity"/>
    <property type="evidence" value="ECO:0000318"/>
    <property type="project" value="GO_Central"/>
</dbReference>
<dbReference type="GO" id="GO:0004672">
    <property type="term" value="F:protein kinase activity"/>
    <property type="evidence" value="ECO:0007669"/>
    <property type="project" value="InterPro"/>
</dbReference>
<dbReference type="GO" id="GO:0006182">
    <property type="term" value="P:cGMP biosynthetic process"/>
    <property type="evidence" value="ECO:0000318"/>
    <property type="project" value="GO_Central"/>
</dbReference>
<dbReference type="GO" id="GO:0035556">
    <property type="term" value="P:intracellular signal transduction"/>
    <property type="evidence" value="ECO:0007669"/>
    <property type="project" value="InterPro"/>
</dbReference>
<dbReference type="GO" id="GO:0007168">
    <property type="term" value="P:receptor guanylyl cyclase signaling pathway"/>
    <property type="evidence" value="ECO:0000318"/>
    <property type="project" value="GO_Central"/>
</dbReference>
<dbReference type="CDD" id="cd07302">
    <property type="entry name" value="CHD"/>
    <property type="match status" value="1"/>
</dbReference>
<dbReference type="CDD" id="cd06370">
    <property type="entry name" value="PBP1_SAP_GC-like"/>
    <property type="match status" value="1"/>
</dbReference>
<dbReference type="CDD" id="cd14042">
    <property type="entry name" value="PK_GC-A_B"/>
    <property type="match status" value="1"/>
</dbReference>
<dbReference type="FunFam" id="1.10.510.10:FF:000420">
    <property type="entry name" value="Guanylate cyclase"/>
    <property type="match status" value="1"/>
</dbReference>
<dbReference type="FunFam" id="3.30.70.1230:FF:000004">
    <property type="entry name" value="Guanylate cyclase"/>
    <property type="match status" value="1"/>
</dbReference>
<dbReference type="Gene3D" id="3.40.50.2300">
    <property type="match status" value="2"/>
</dbReference>
<dbReference type="Gene3D" id="3.30.70.1230">
    <property type="entry name" value="Nucleotide cyclase"/>
    <property type="match status" value="1"/>
</dbReference>
<dbReference type="Gene3D" id="1.10.510.10">
    <property type="entry name" value="Transferase(Phosphotransferase) domain 1"/>
    <property type="match status" value="1"/>
</dbReference>
<dbReference type="InterPro" id="IPR001054">
    <property type="entry name" value="A/G_cyclase"/>
</dbReference>
<dbReference type="InterPro" id="IPR018297">
    <property type="entry name" value="A/G_cyclase_CS"/>
</dbReference>
<dbReference type="InterPro" id="IPR001828">
    <property type="entry name" value="ANF_lig-bd_rcpt"/>
</dbReference>
<dbReference type="InterPro" id="IPR050401">
    <property type="entry name" value="Cyclic_nucleotide_synthase"/>
</dbReference>
<dbReference type="InterPro" id="IPR011645">
    <property type="entry name" value="HNOB_dom_associated"/>
</dbReference>
<dbReference type="InterPro" id="IPR011009">
    <property type="entry name" value="Kinase-like_dom_sf"/>
</dbReference>
<dbReference type="InterPro" id="IPR029787">
    <property type="entry name" value="Nucleotide_cyclase"/>
</dbReference>
<dbReference type="InterPro" id="IPR028082">
    <property type="entry name" value="Peripla_BP_I"/>
</dbReference>
<dbReference type="InterPro" id="IPR000719">
    <property type="entry name" value="Prot_kinase_dom"/>
</dbReference>
<dbReference type="InterPro" id="IPR001245">
    <property type="entry name" value="Ser-Thr/Tyr_kinase_cat_dom"/>
</dbReference>
<dbReference type="PANTHER" id="PTHR11920:SF335">
    <property type="entry name" value="GUANYLATE CYCLASE"/>
    <property type="match status" value="1"/>
</dbReference>
<dbReference type="PANTHER" id="PTHR11920">
    <property type="entry name" value="GUANYLYL CYCLASE"/>
    <property type="match status" value="1"/>
</dbReference>
<dbReference type="Pfam" id="PF01094">
    <property type="entry name" value="ANF_receptor"/>
    <property type="match status" value="1"/>
</dbReference>
<dbReference type="Pfam" id="PF00211">
    <property type="entry name" value="Guanylate_cyc"/>
    <property type="match status" value="1"/>
</dbReference>
<dbReference type="Pfam" id="PF07701">
    <property type="entry name" value="HNOBA"/>
    <property type="match status" value="1"/>
</dbReference>
<dbReference type="Pfam" id="PF07714">
    <property type="entry name" value="PK_Tyr_Ser-Thr"/>
    <property type="match status" value="1"/>
</dbReference>
<dbReference type="SMART" id="SM00044">
    <property type="entry name" value="CYCc"/>
    <property type="match status" value="1"/>
</dbReference>
<dbReference type="SUPFAM" id="SSF55073">
    <property type="entry name" value="Nucleotide cyclase"/>
    <property type="match status" value="1"/>
</dbReference>
<dbReference type="SUPFAM" id="SSF53822">
    <property type="entry name" value="Periplasmic binding protein-like I"/>
    <property type="match status" value="1"/>
</dbReference>
<dbReference type="SUPFAM" id="SSF56112">
    <property type="entry name" value="Protein kinase-like (PK-like)"/>
    <property type="match status" value="1"/>
</dbReference>
<dbReference type="PROSITE" id="PS00452">
    <property type="entry name" value="GUANYLATE_CYCLASE_1"/>
    <property type="match status" value="1"/>
</dbReference>
<dbReference type="PROSITE" id="PS50125">
    <property type="entry name" value="GUANYLATE_CYCLASE_2"/>
    <property type="match status" value="1"/>
</dbReference>
<dbReference type="PROSITE" id="PS50011">
    <property type="entry name" value="PROTEIN_KINASE_DOM"/>
    <property type="match status" value="1"/>
</dbReference>
<proteinExistence type="evidence at transcript level"/>
<feature type="signal peptide" evidence="1">
    <location>
        <begin position="1"/>
        <end position="21"/>
    </location>
</feature>
<feature type="chain" id="PRO_0000012391" description="Speract receptor">
    <location>
        <begin position="22"/>
        <end position="1125"/>
    </location>
</feature>
<feature type="topological domain" description="Extracellular" evidence="1">
    <location>
        <begin position="22"/>
        <end position="510"/>
    </location>
</feature>
<feature type="transmembrane region" description="Helical" evidence="1">
    <location>
        <begin position="511"/>
        <end position="531"/>
    </location>
</feature>
<feature type="topological domain" description="Cytoplasmic" evidence="1">
    <location>
        <begin position="532"/>
        <end position="1125"/>
    </location>
</feature>
<feature type="domain" description="Protein kinase" evidence="3">
    <location>
        <begin position="571"/>
        <end position="839"/>
    </location>
</feature>
<feature type="domain" description="Guanylate cyclase" evidence="2">
    <location>
        <begin position="914"/>
        <end position="1044"/>
    </location>
</feature>
<feature type="glycosylation site" description="N-linked (GlcNAc...) asparagine" evidence="1">
    <location>
        <position position="185"/>
    </location>
</feature>
<feature type="glycosylation site" description="N-linked (GlcNAc...) asparagine" evidence="1">
    <location>
        <position position="409"/>
    </location>
</feature>